<protein>
    <recommendedName>
        <fullName>Uncharacterized protein in cpcG3 3'region</fullName>
    </recommendedName>
    <alternativeName>
        <fullName>ORF1</fullName>
    </alternativeName>
</protein>
<organism>
    <name type="scientific">Mastigocladus laminosus</name>
    <name type="common">Fischerella sp.</name>
    <dbReference type="NCBI Taxonomy" id="83541"/>
    <lineage>
        <taxon>Bacteria</taxon>
        <taxon>Bacillati</taxon>
        <taxon>Cyanobacteriota</taxon>
        <taxon>Cyanophyceae</taxon>
        <taxon>Nostocales</taxon>
        <taxon>Hapalosiphonaceae</taxon>
        <taxon>Mastigocladus</taxon>
    </lineage>
</organism>
<proteinExistence type="predicted"/>
<accession>P29735</accession>
<sequence length="32" mass="3983">MIKKLTHATIWFLYSNYINYKLYLVLIIYQKS</sequence>
<reference key="1">
    <citation type="journal article" date="1992" name="Eur. J. Biochem.">
        <title>Structure of the genes encoding the rod-core linker polypeptides of Mastigocladus laminosus phycobilisomes and functional aspects of the phycobiliprotein/linker-polypeptide interactions.</title>
        <authorList>
            <person name="Glauser M."/>
            <person name="Stirewalt V.L."/>
            <person name="Bryant D.A."/>
            <person name="Sidler W."/>
            <person name="Zuber H."/>
        </authorList>
    </citation>
    <scope>NUCLEOTIDE SEQUENCE [GENOMIC DNA]</scope>
    <source>
        <strain>PCC 7603</strain>
    </source>
</reference>
<keyword id="KW-0042">Antenna complex</keyword>
<keyword id="KW-0605">Phycobilisome</keyword>
<dbReference type="EMBL" id="X59763">
    <property type="protein sequence ID" value="CAA42436.1"/>
    <property type="molecule type" value="Genomic_DNA"/>
</dbReference>
<dbReference type="GO" id="GO:0030089">
    <property type="term" value="C:phycobilisome"/>
    <property type="evidence" value="ECO:0007669"/>
    <property type="project" value="UniProtKB-KW"/>
</dbReference>
<name>YCPG_MASLA</name>
<feature type="chain" id="PRO_0000199289" description="Uncharacterized protein in cpcG3 3'region">
    <location>
        <begin position="1"/>
        <end position="32" status="greater than"/>
    </location>
</feature>
<feature type="non-terminal residue">
    <location>
        <position position="32"/>
    </location>
</feature>